<reference key="1">
    <citation type="journal article" date="2000" name="J. Biol. Chem.">
        <title>Five members of a novel Ca(2+)-binding protein (CABP) subfamily with similarity to calmodulin.</title>
        <authorList>
            <person name="Haeseleer F."/>
            <person name="Sokal I."/>
            <person name="Verlinde C.L.M.J."/>
            <person name="Erdjument-Bromage H."/>
            <person name="Tempst P."/>
            <person name="Pronin A.N."/>
            <person name="Benovic J.L."/>
            <person name="Fariss R.N."/>
            <person name="Palczewski K."/>
        </authorList>
    </citation>
    <scope>NUCLEOTIDE SEQUENCE [MRNA] (ISOFORMS L-CABP1 AND S-CABP1)</scope>
    <scope>PARTIAL PROTEIN SEQUENCE</scope>
    <scope>IDENTIFICATION BY MASS SPECTROMETRY</scope>
    <source>
        <tissue>Retina</tissue>
    </source>
</reference>
<proteinExistence type="evidence at protein level"/>
<accession>Q9N1R0</accession>
<accession>Q9N1R1</accession>
<gene>
    <name type="primary">CABP1</name>
</gene>
<sequence length="226" mass="25755">MGNCVKSPLRNLSRKMRQEETSYTVVQTSEEGLAASGELPGPLLMLAQNCAVMHNLLGPACIFLRKGFAENRQPDRSLRPEEIEELREAFREFDKDKDGYINCRDLGNCMRTMGYMPTEMELIELSQQINMNLGGHVDFDDFVELMGPKLLAETADMIGVKELRDAFREFDTNGDGEISTSELREAMRKLLGHQVGHRDIEEIIRDVDLNGDGRVDFEEFVRMMSR</sequence>
<name>CABP1_BOVIN</name>
<dbReference type="EMBL" id="AF169151">
    <property type="protein sequence ID" value="AAF25785.1"/>
    <property type="molecule type" value="mRNA"/>
</dbReference>
<dbReference type="EMBL" id="AF169150">
    <property type="protein sequence ID" value="AAF25784.1"/>
    <property type="molecule type" value="mRNA"/>
</dbReference>
<dbReference type="RefSeq" id="NP_776679.1">
    <molecule id="Q9N1R0-1"/>
    <property type="nucleotide sequence ID" value="NM_174254.2"/>
</dbReference>
<dbReference type="SMR" id="Q9N1R0"/>
<dbReference type="FunCoup" id="Q9N1R0">
    <property type="interactions" value="201"/>
</dbReference>
<dbReference type="STRING" id="9913.ENSBTAP00000069067"/>
<dbReference type="PaxDb" id="9913-ENSBTAP00000026714"/>
<dbReference type="Ensembl" id="ENSBTAT00000083615.2">
    <molecule id="Q9N1R0-1"/>
    <property type="protein sequence ID" value="ENSBTAP00000072049.1"/>
    <property type="gene ID" value="ENSBTAG00000020049.8"/>
</dbReference>
<dbReference type="Ensembl" id="ENSBTAT00000084965.2">
    <molecule id="Q9N1R0-2"/>
    <property type="protein sequence ID" value="ENSBTAP00000069067.2"/>
    <property type="gene ID" value="ENSBTAG00000020049.8"/>
</dbReference>
<dbReference type="GeneID" id="281653"/>
<dbReference type="KEGG" id="bta:281653"/>
<dbReference type="CTD" id="9478"/>
<dbReference type="VEuPathDB" id="HostDB:ENSBTAG00000020049"/>
<dbReference type="eggNOG" id="KOG0027">
    <property type="taxonomic scope" value="Eukaryota"/>
</dbReference>
<dbReference type="GeneTree" id="ENSGT00940000158555"/>
<dbReference type="HOGENOM" id="CLU_061288_2_2_1"/>
<dbReference type="InParanoid" id="Q9N1R0"/>
<dbReference type="OMA" id="AHNCALM"/>
<dbReference type="OrthoDB" id="26525at2759"/>
<dbReference type="TreeFam" id="TF334804"/>
<dbReference type="Proteomes" id="UP000009136">
    <property type="component" value="Chromosome 17"/>
</dbReference>
<dbReference type="Bgee" id="ENSBTAG00000020049">
    <property type="expression patterns" value="Expressed in cerebellum and 89 other cell types or tissues"/>
</dbReference>
<dbReference type="GO" id="GO:0005737">
    <property type="term" value="C:cytoplasm"/>
    <property type="evidence" value="ECO:0000318"/>
    <property type="project" value="GO_Central"/>
</dbReference>
<dbReference type="GO" id="GO:0005856">
    <property type="term" value="C:cytoskeleton"/>
    <property type="evidence" value="ECO:0007669"/>
    <property type="project" value="UniProtKB-SubCell"/>
</dbReference>
<dbReference type="GO" id="GO:0005794">
    <property type="term" value="C:Golgi apparatus"/>
    <property type="evidence" value="ECO:0007669"/>
    <property type="project" value="UniProtKB-SubCell"/>
</dbReference>
<dbReference type="GO" id="GO:0048471">
    <property type="term" value="C:perinuclear region of cytoplasm"/>
    <property type="evidence" value="ECO:0007669"/>
    <property type="project" value="UniProtKB-SubCell"/>
</dbReference>
<dbReference type="GO" id="GO:0005886">
    <property type="term" value="C:plasma membrane"/>
    <property type="evidence" value="ECO:0007669"/>
    <property type="project" value="UniProtKB-SubCell"/>
</dbReference>
<dbReference type="GO" id="GO:0014069">
    <property type="term" value="C:postsynaptic density"/>
    <property type="evidence" value="ECO:0000250"/>
    <property type="project" value="AgBase"/>
</dbReference>
<dbReference type="GO" id="GO:0005246">
    <property type="term" value="F:calcium channel regulator activity"/>
    <property type="evidence" value="ECO:0000318"/>
    <property type="project" value="GO_Central"/>
</dbReference>
<dbReference type="GO" id="GO:0005509">
    <property type="term" value="F:calcium ion binding"/>
    <property type="evidence" value="ECO:0007669"/>
    <property type="project" value="InterPro"/>
</dbReference>
<dbReference type="GO" id="GO:0048306">
    <property type="term" value="F:calcium-dependent protein binding"/>
    <property type="evidence" value="ECO:0000250"/>
    <property type="project" value="UniProtKB"/>
</dbReference>
<dbReference type="GO" id="GO:0008139">
    <property type="term" value="F:nuclear localization sequence binding"/>
    <property type="evidence" value="ECO:0000250"/>
    <property type="project" value="UniProtKB"/>
</dbReference>
<dbReference type="GO" id="GO:0042308">
    <property type="term" value="P:negative regulation of protein import into nucleus"/>
    <property type="evidence" value="ECO:0000250"/>
    <property type="project" value="UniProtKB"/>
</dbReference>
<dbReference type="GO" id="GO:0007601">
    <property type="term" value="P:visual perception"/>
    <property type="evidence" value="ECO:0000250"/>
    <property type="project" value="UniProtKB"/>
</dbReference>
<dbReference type="CDD" id="cd00051">
    <property type="entry name" value="EFh"/>
    <property type="match status" value="1"/>
</dbReference>
<dbReference type="FunFam" id="1.10.238.10:FF:000069">
    <property type="entry name" value="calcium-binding protein 1 isoform X1"/>
    <property type="match status" value="1"/>
</dbReference>
<dbReference type="FunFam" id="1.10.238.10:FF:000037">
    <property type="entry name" value="calcium-binding protein 1 isoform X2"/>
    <property type="match status" value="1"/>
</dbReference>
<dbReference type="Gene3D" id="1.10.238.10">
    <property type="entry name" value="EF-hand"/>
    <property type="match status" value="2"/>
</dbReference>
<dbReference type="InterPro" id="IPR043582">
    <property type="entry name" value="CaBP1/2/4/5"/>
</dbReference>
<dbReference type="InterPro" id="IPR011992">
    <property type="entry name" value="EF-hand-dom_pair"/>
</dbReference>
<dbReference type="InterPro" id="IPR018247">
    <property type="entry name" value="EF_Hand_1_Ca_BS"/>
</dbReference>
<dbReference type="InterPro" id="IPR002048">
    <property type="entry name" value="EF_hand_dom"/>
</dbReference>
<dbReference type="PANTHER" id="PTHR45917:SF1">
    <property type="entry name" value="CALCIUM-BINDING PROTEIN 1"/>
    <property type="match status" value="1"/>
</dbReference>
<dbReference type="PANTHER" id="PTHR45917">
    <property type="entry name" value="CALCIUM-BINDING PROTEIN 1-RELATED"/>
    <property type="match status" value="1"/>
</dbReference>
<dbReference type="Pfam" id="PF13499">
    <property type="entry name" value="EF-hand_7"/>
    <property type="match status" value="2"/>
</dbReference>
<dbReference type="SMART" id="SM00054">
    <property type="entry name" value="EFh"/>
    <property type="match status" value="3"/>
</dbReference>
<dbReference type="SUPFAM" id="SSF47473">
    <property type="entry name" value="EF-hand"/>
    <property type="match status" value="1"/>
</dbReference>
<dbReference type="PROSITE" id="PS00018">
    <property type="entry name" value="EF_HAND_1"/>
    <property type="match status" value="3"/>
</dbReference>
<dbReference type="PROSITE" id="PS50222">
    <property type="entry name" value="EF_HAND_2"/>
    <property type="match status" value="4"/>
</dbReference>
<protein>
    <recommendedName>
        <fullName>Calcium-binding protein 1</fullName>
        <shortName>CaBP1</shortName>
    </recommendedName>
</protein>
<comment type="function">
    <text evidence="2 3 4">Modulates calcium-dependent activity of inositol 1,4,5-triphosphate receptors (ITPRs). Inhibits agonist-induced intracellular calcium signaling. Enhances inactivation and does not support calcium-dependent facilitation of voltage-dependent P/Q-type calcium channels. Causes calcium-dependent facilitation and inhibits inactivation of L-type calcium channels by binding to the same sites as calmodulin in the C-terminal domain of CACNA1C, but has an opposite effect on channel function. Suppresses the calcium-dependent inactivation of CACNA1D. Inhibits TRPC5 channels. Prevents NMDA receptor-induced cellular degeneration. Required for the normal transfer of light signals through the retina.</text>
</comment>
<comment type="subunit">
    <text evidence="2 3 4">Homodimer. Interacts (via C-terminus) with ITPR1, ITPR2 and ITPR3. This binding is calcium dependent and the interaction correlates with calcium concentration. An additional calcium-independent interaction with the N-terminus of ITPR1 results in a decreased InsP(3) binding to the receptor (By similarity). Interacts with CACNA1A (via C-terminal CDB motif) in the pre- and postsynaptic membranes (By similarity). Interacts with CACNA1C (via C-terminal C and IQ motifs). Interacts with CACNA1D (By similarity). The binding to the C motif is calcium independent whereas the binding to IQ requires the presence of calcium and is mutually exclusive with calmodulin binding (By similarity). Interacts with TRPC5 (via C-terminus) (By similarity). Interacts (via EF-hands 1 and 2) at microtubules with MAP1LC3B (By similarity). Interacts with MYO1C (By similarity). Interacts (via EF-hands 1 and 2) with NSMF (via the central NLS-containing motif region), the interaction occurs in a calcium dependent manner after synaptic NMDA receptor stimulation and prevents nuclear import of NSMF. Interacts with SPACA9 (By similarity).</text>
</comment>
<comment type="subcellular location">
    <subcellularLocation>
        <location evidence="1">Cytoplasm</location>
        <location evidence="1">Cytoskeleton</location>
    </subcellularLocation>
    <subcellularLocation>
        <location evidence="1">Cytoplasm</location>
        <location evidence="1">Perinuclear region</location>
    </subcellularLocation>
    <subcellularLocation>
        <location evidence="1">Cell membrane</location>
        <topology evidence="1">Lipid-anchor</topology>
        <orientation evidence="1">Cytoplasmic side</orientation>
    </subcellularLocation>
    <subcellularLocation>
        <location evidence="1">Golgi apparatus</location>
    </subcellularLocation>
    <subcellularLocation>
        <location evidence="1">Postsynaptic density</location>
    </subcellularLocation>
</comment>
<comment type="alternative products">
    <event type="alternative splicing"/>
    <isoform>
        <id>Q9N1R0-1</id>
        <name>L-CaBP1</name>
        <sequence type="displayed"/>
    </isoform>
    <isoform>
        <id>Q9N1R0-2</id>
        <name>S-CaBP1</name>
        <sequence type="described" ref="VSP_000730"/>
    </isoform>
</comment>
<comment type="domain">
    <text evidence="1">EF-1 binds magnesium constitutively under physiological conditions, EF-3 and EF-4 bind calcium cooperatively and EF-2 binds neither calcium nor magnesium.</text>
</comment>
<comment type="PTM">
    <text evidence="1">Phosphorylated. The phosphorylation regulates the activity (By similarity).</text>
</comment>
<feature type="initiator methionine" description="Removed">
    <location>
        <position position="1"/>
    </location>
</feature>
<feature type="chain" id="PRO_0000073512" description="Calcium-binding protein 1">
    <location>
        <begin position="2"/>
        <end position="226"/>
    </location>
</feature>
<feature type="domain" description="EF-hand 1" evidence="5">
    <location>
        <begin position="81"/>
        <end position="116"/>
    </location>
</feature>
<feature type="domain" description="EF-hand 2" evidence="5">
    <location>
        <begin position="135"/>
        <end position="152"/>
    </location>
</feature>
<feature type="domain" description="EF-hand 3" evidence="5">
    <location>
        <begin position="158"/>
        <end position="193"/>
    </location>
</feature>
<feature type="domain" description="EF-hand 4" evidence="5">
    <location>
        <begin position="195"/>
        <end position="226"/>
    </location>
</feature>
<feature type="binding site" evidence="5">
    <location>
        <position position="94"/>
    </location>
    <ligand>
        <name>Ca(2+)</name>
        <dbReference type="ChEBI" id="CHEBI:29108"/>
        <label>1</label>
    </ligand>
</feature>
<feature type="binding site" evidence="5">
    <location>
        <position position="96"/>
    </location>
    <ligand>
        <name>Ca(2+)</name>
        <dbReference type="ChEBI" id="CHEBI:29108"/>
        <label>1</label>
    </ligand>
</feature>
<feature type="binding site" evidence="5">
    <location>
        <position position="98"/>
    </location>
    <ligand>
        <name>Ca(2+)</name>
        <dbReference type="ChEBI" id="CHEBI:29108"/>
        <label>1</label>
    </ligand>
</feature>
<feature type="binding site" evidence="5">
    <location>
        <position position="100"/>
    </location>
    <ligand>
        <name>Ca(2+)</name>
        <dbReference type="ChEBI" id="CHEBI:29108"/>
        <label>1</label>
    </ligand>
</feature>
<feature type="binding site" evidence="5">
    <location>
        <position position="105"/>
    </location>
    <ligand>
        <name>Ca(2+)</name>
        <dbReference type="ChEBI" id="CHEBI:29108"/>
        <label>1</label>
    </ligand>
</feature>
<feature type="binding site" evidence="5">
    <location>
        <position position="171"/>
    </location>
    <ligand>
        <name>Ca(2+)</name>
        <dbReference type="ChEBI" id="CHEBI:29108"/>
        <label>2</label>
    </ligand>
</feature>
<feature type="binding site" evidence="5">
    <location>
        <position position="173"/>
    </location>
    <ligand>
        <name>Ca(2+)</name>
        <dbReference type="ChEBI" id="CHEBI:29108"/>
        <label>2</label>
    </ligand>
</feature>
<feature type="binding site" evidence="5">
    <location>
        <position position="175"/>
    </location>
    <ligand>
        <name>Ca(2+)</name>
        <dbReference type="ChEBI" id="CHEBI:29108"/>
        <label>2</label>
    </ligand>
</feature>
<feature type="binding site" evidence="5">
    <location>
        <position position="177"/>
    </location>
    <ligand>
        <name>Ca(2+)</name>
        <dbReference type="ChEBI" id="CHEBI:29108"/>
        <label>2</label>
    </ligand>
</feature>
<feature type="binding site" evidence="5">
    <location>
        <position position="182"/>
    </location>
    <ligand>
        <name>Ca(2+)</name>
        <dbReference type="ChEBI" id="CHEBI:29108"/>
        <label>2</label>
    </ligand>
</feature>
<feature type="binding site" evidence="5">
    <location>
        <position position="208"/>
    </location>
    <ligand>
        <name>Ca(2+)</name>
        <dbReference type="ChEBI" id="CHEBI:29108"/>
        <label>3</label>
    </ligand>
</feature>
<feature type="binding site" evidence="5">
    <location>
        <position position="210"/>
    </location>
    <ligand>
        <name>Ca(2+)</name>
        <dbReference type="ChEBI" id="CHEBI:29108"/>
        <label>3</label>
    </ligand>
</feature>
<feature type="binding site" evidence="5">
    <location>
        <position position="212"/>
    </location>
    <ligand>
        <name>Ca(2+)</name>
        <dbReference type="ChEBI" id="CHEBI:29108"/>
        <label>3</label>
    </ligand>
</feature>
<feature type="binding site" evidence="5">
    <location>
        <position position="214"/>
    </location>
    <ligand>
        <name>Ca(2+)</name>
        <dbReference type="ChEBI" id="CHEBI:29108"/>
        <label>3</label>
    </ligand>
</feature>
<feature type="binding site" evidence="5">
    <location>
        <position position="219"/>
    </location>
    <ligand>
        <name>Ca(2+)</name>
        <dbReference type="ChEBI" id="CHEBI:29108"/>
        <label>3</label>
    </ligand>
</feature>
<feature type="modified residue" description="Phosphoserine" evidence="4">
    <location>
        <position position="179"/>
    </location>
</feature>
<feature type="lipid moiety-binding region" description="N-myristoyl glycine" evidence="4">
    <location>
        <position position="2"/>
    </location>
</feature>
<feature type="lipid moiety-binding region" description="S-palmitoyl cysteine" evidence="4">
    <location>
        <position position="4"/>
    </location>
</feature>
<feature type="splice variant" id="VSP_000730" description="In isoform S-CaBP1." evidence="6">
    <location>
        <begin position="16"/>
        <end position="74"/>
    </location>
</feature>
<feature type="initiator methionine" description="Removed" evidence="7">
    <location sequence="Q9N1R0-2">
        <position position="1"/>
    </location>
</feature>
<feature type="lipid moiety-binding region" description="N-myristoyl glycine" evidence="7">
    <location sequence="Q9N1R0-2">
        <position position="2"/>
    </location>
</feature>
<feature type="lipid moiety-binding region" description="S-palmitoyl cysteine" evidence="7">
    <location sequence="Q9N1R0-2">
        <position position="4"/>
    </location>
</feature>
<evidence type="ECO:0000250" key="1"/>
<evidence type="ECO:0000250" key="2">
    <source>
        <dbReference type="UniProtKB" id="O88751"/>
    </source>
</evidence>
<evidence type="ECO:0000250" key="3">
    <source>
        <dbReference type="UniProtKB" id="Q9JLK7"/>
    </source>
</evidence>
<evidence type="ECO:0000250" key="4">
    <source>
        <dbReference type="UniProtKB" id="Q9NZU7"/>
    </source>
</evidence>
<evidence type="ECO:0000255" key="5">
    <source>
        <dbReference type="PROSITE-ProRule" id="PRU00448"/>
    </source>
</evidence>
<evidence type="ECO:0000303" key="6">
    <source>
    </source>
</evidence>
<evidence type="ECO:0000305" key="7"/>
<keyword id="KW-0025">Alternative splicing</keyword>
<keyword id="KW-0106">Calcium</keyword>
<keyword id="KW-1003">Cell membrane</keyword>
<keyword id="KW-0963">Cytoplasm</keyword>
<keyword id="KW-0206">Cytoskeleton</keyword>
<keyword id="KW-0903">Direct protein sequencing</keyword>
<keyword id="KW-0333">Golgi apparatus</keyword>
<keyword id="KW-0449">Lipoprotein</keyword>
<keyword id="KW-0472">Membrane</keyword>
<keyword id="KW-0479">Metal-binding</keyword>
<keyword id="KW-0519">Myristate</keyword>
<keyword id="KW-0564">Palmitate</keyword>
<keyword id="KW-0597">Phosphoprotein</keyword>
<keyword id="KW-1185">Reference proteome</keyword>
<keyword id="KW-0677">Repeat</keyword>
<keyword id="KW-0716">Sensory transduction</keyword>
<keyword id="KW-0770">Synapse</keyword>
<keyword id="KW-0844">Vision</keyword>
<organism>
    <name type="scientific">Bos taurus</name>
    <name type="common">Bovine</name>
    <dbReference type="NCBI Taxonomy" id="9913"/>
    <lineage>
        <taxon>Eukaryota</taxon>
        <taxon>Metazoa</taxon>
        <taxon>Chordata</taxon>
        <taxon>Craniata</taxon>
        <taxon>Vertebrata</taxon>
        <taxon>Euteleostomi</taxon>
        <taxon>Mammalia</taxon>
        <taxon>Eutheria</taxon>
        <taxon>Laurasiatheria</taxon>
        <taxon>Artiodactyla</taxon>
        <taxon>Ruminantia</taxon>
        <taxon>Pecora</taxon>
        <taxon>Bovidae</taxon>
        <taxon>Bovinae</taxon>
        <taxon>Bos</taxon>
    </lineage>
</organism>